<organism>
    <name type="scientific">Bos mutus grunniens</name>
    <name type="common">Wild yak</name>
    <name type="synonym">Bos grunniens</name>
    <dbReference type="NCBI Taxonomy" id="30521"/>
    <lineage>
        <taxon>Eukaryota</taxon>
        <taxon>Metazoa</taxon>
        <taxon>Chordata</taxon>
        <taxon>Craniata</taxon>
        <taxon>Vertebrata</taxon>
        <taxon>Euteleostomi</taxon>
        <taxon>Mammalia</taxon>
        <taxon>Eutheria</taxon>
        <taxon>Laurasiatheria</taxon>
        <taxon>Artiodactyla</taxon>
        <taxon>Ruminantia</taxon>
        <taxon>Pecora</taxon>
        <taxon>Bovidae</taxon>
        <taxon>Bovinae</taxon>
        <taxon>Bos</taxon>
    </lineage>
</organism>
<proteinExistence type="inferred from homology"/>
<protein>
    <recommendedName>
        <fullName>Glycoprotein hormones alpha chain</fullName>
    </recommendedName>
    <alternativeName>
        <fullName>Anterior pituitary glycoprotein hormones common subunit alpha</fullName>
    </alternativeName>
    <alternativeName>
        <fullName>Follicle-stimulating hormone alpha chain</fullName>
        <shortName>FSH-alpha</shortName>
    </alternativeName>
    <alternativeName>
        <fullName>Follitropin alpha chain</fullName>
    </alternativeName>
    <alternativeName>
        <fullName>Luteinizing hormone alpha chain</fullName>
        <shortName>LSH-alpha</shortName>
    </alternativeName>
    <alternativeName>
        <fullName>Lutropin alpha chain</fullName>
    </alternativeName>
    <alternativeName>
        <fullName>Thyroid-stimulating hormone alpha chain</fullName>
        <shortName>TSH-alpha</shortName>
    </alternativeName>
    <alternativeName>
        <fullName>Thyrotropin alpha chain</fullName>
    </alternativeName>
</protein>
<feature type="signal peptide" evidence="1">
    <location>
        <begin position="1"/>
        <end position="24"/>
    </location>
</feature>
<feature type="chain" id="PRO_0000253478" description="Glycoprotein hormones alpha chain">
    <location>
        <begin position="25"/>
        <end position="120"/>
    </location>
</feature>
<feature type="glycosylation site" description="N-linked (GlcNAc...) asparagine" evidence="2">
    <location>
        <position position="80"/>
    </location>
</feature>
<feature type="glycosylation site" description="N-linked (GlcNAc...) asparagine" evidence="2">
    <location>
        <position position="106"/>
    </location>
</feature>
<feature type="disulfide bond" evidence="2">
    <location>
        <begin position="35"/>
        <end position="59"/>
    </location>
</feature>
<feature type="disulfide bond" evidence="2">
    <location>
        <begin position="38"/>
        <end position="88"/>
    </location>
</feature>
<feature type="disulfide bond" evidence="2">
    <location>
        <begin position="56"/>
        <end position="110"/>
    </location>
</feature>
<feature type="disulfide bond" evidence="2">
    <location>
        <begin position="60"/>
        <end position="112"/>
    </location>
</feature>
<feature type="disulfide bond" evidence="2">
    <location>
        <begin position="87"/>
        <end position="115"/>
    </location>
</feature>
<comment type="function">
    <text evidence="2">Shared alpha chain of the active heterodimeric glycoprotein hormones thyrotropin/thyroid stimulating hormone/TSH, lutropin/luteinizing hormone/LH and follitropin/follicle stimulating hormone/FSH. These hormones bind specific receptors on target cells that in turn activate downstream signaling pathways.</text>
</comment>
<comment type="subunit">
    <text evidence="2">Heterodimer. The active hormones thyrotropin, lutropin and follitropin are heterodimers composed of CGA, a common alpha chain described here and a unique beta chain which confers their biological specificity to the hormones: TSHB for thyrotropin, LHB for lutropin and FSHB for follitropin.</text>
</comment>
<comment type="subcellular location">
    <subcellularLocation>
        <location evidence="2">Secreted</location>
    </subcellularLocation>
</comment>
<comment type="similarity">
    <text evidence="3">Belongs to the glycoprotein hormones subunit alpha family.</text>
</comment>
<accession>Q19PY8</accession>
<name>GLHA_BOSMU</name>
<evidence type="ECO:0000250" key="1"/>
<evidence type="ECO:0000250" key="2">
    <source>
        <dbReference type="UniProtKB" id="P01215"/>
    </source>
</evidence>
<evidence type="ECO:0000305" key="3"/>
<keyword id="KW-1015">Disulfide bond</keyword>
<keyword id="KW-0325">Glycoprotein</keyword>
<keyword id="KW-0372">Hormone</keyword>
<keyword id="KW-1185">Reference proteome</keyword>
<keyword id="KW-0964">Secreted</keyword>
<keyword id="KW-0732">Signal</keyword>
<gene>
    <name type="primary">CGA</name>
</gene>
<dbReference type="EMBL" id="DQ508147">
    <property type="protein sequence ID" value="ABF68854.1"/>
    <property type="molecule type" value="Genomic_DNA"/>
</dbReference>
<dbReference type="SMR" id="Q19PY8"/>
<dbReference type="GlyCosmos" id="Q19PY8">
    <property type="glycosylation" value="2 sites, No reported glycans"/>
</dbReference>
<dbReference type="Ensembl" id="ENSBGRT00000040345.1">
    <property type="protein sequence ID" value="ENSBGRP00000034900.1"/>
    <property type="gene ID" value="ENSBGRG00000021837.1"/>
</dbReference>
<dbReference type="Ensembl" id="ENSBGRT00000040370.1">
    <property type="protein sequence ID" value="ENSBGRP00000034923.1"/>
    <property type="gene ID" value="ENSBGRG00000021837.1"/>
</dbReference>
<dbReference type="GeneTree" id="ENSGT00390000012242"/>
<dbReference type="Proteomes" id="UP000694520">
    <property type="component" value="Chromosome 10"/>
</dbReference>
<dbReference type="GO" id="GO:0005615">
    <property type="term" value="C:extracellular space"/>
    <property type="evidence" value="ECO:0000250"/>
    <property type="project" value="UniProtKB"/>
</dbReference>
<dbReference type="GO" id="GO:0016914">
    <property type="term" value="C:follicle-stimulating hormone complex"/>
    <property type="evidence" value="ECO:0000250"/>
    <property type="project" value="UniProtKB"/>
</dbReference>
<dbReference type="GO" id="GO:0016913">
    <property type="term" value="F:follicle-stimulating hormone activity"/>
    <property type="evidence" value="ECO:0000250"/>
    <property type="project" value="UniProtKB"/>
</dbReference>
<dbReference type="GO" id="GO:0007186">
    <property type="term" value="P:G protein-coupled receptor signaling pathway"/>
    <property type="evidence" value="ECO:0000250"/>
    <property type="project" value="UniProtKB"/>
</dbReference>
<dbReference type="GO" id="GO:0010893">
    <property type="term" value="P:positive regulation of steroid biosynthetic process"/>
    <property type="evidence" value="ECO:0000250"/>
    <property type="project" value="UniProtKB"/>
</dbReference>
<dbReference type="GO" id="GO:0010469">
    <property type="term" value="P:regulation of signaling receptor activity"/>
    <property type="evidence" value="ECO:0000250"/>
    <property type="project" value="UniProtKB"/>
</dbReference>
<dbReference type="GO" id="GO:0006590">
    <property type="term" value="P:thyroid hormone generation"/>
    <property type="evidence" value="ECO:0007669"/>
    <property type="project" value="TreeGrafter"/>
</dbReference>
<dbReference type="FunFam" id="2.10.90.10:FF:000011">
    <property type="entry name" value="Glycoprotein hormones alpha chain"/>
    <property type="match status" value="1"/>
</dbReference>
<dbReference type="Gene3D" id="2.10.90.10">
    <property type="entry name" value="Cystine-knot cytokines"/>
    <property type="match status" value="1"/>
</dbReference>
<dbReference type="InterPro" id="IPR029034">
    <property type="entry name" value="Cystine-knot_cytokine"/>
</dbReference>
<dbReference type="InterPro" id="IPR000476">
    <property type="entry name" value="Glyco_hormone"/>
</dbReference>
<dbReference type="PANTHER" id="PTHR11509">
    <property type="entry name" value="GLYCOPROTEIN HORMONE ALPHA CHAIN"/>
    <property type="match status" value="1"/>
</dbReference>
<dbReference type="PANTHER" id="PTHR11509:SF0">
    <property type="entry name" value="GLYCOPROTEIN HORMONES ALPHA CHAIN"/>
    <property type="match status" value="1"/>
</dbReference>
<dbReference type="Pfam" id="PF00236">
    <property type="entry name" value="Hormone_6"/>
    <property type="match status" value="1"/>
</dbReference>
<dbReference type="PRINTS" id="PR00274">
    <property type="entry name" value="GLYCOHORMONE"/>
</dbReference>
<dbReference type="SMART" id="SM00067">
    <property type="entry name" value="GHA"/>
    <property type="match status" value="1"/>
</dbReference>
<dbReference type="SUPFAM" id="SSF57501">
    <property type="entry name" value="Cystine-knot cytokines"/>
    <property type="match status" value="1"/>
</dbReference>
<dbReference type="PROSITE" id="PS00779">
    <property type="entry name" value="GLYCO_HORMONE_ALPHA_1"/>
    <property type="match status" value="1"/>
</dbReference>
<dbReference type="PROSITE" id="PS00780">
    <property type="entry name" value="GLYCO_HORMONE_ALPHA_2"/>
    <property type="match status" value="1"/>
</dbReference>
<dbReference type="PROSITE" id="PS50277">
    <property type="entry name" value="GLYCO_HORMONE_ALPHA_3"/>
    <property type="match status" value="1"/>
</dbReference>
<sequence length="120" mass="13616">MDYYRKYAAVILAILSLFLQILHSFPDGEFTMQGCPECKLKENKYFSKPDAPIYQCMGCCFSRAYPTPARSKKTMLVPKNITSEATCCVAKAFTKATVMGNVRVENHTECHCSTCYYHKS</sequence>
<reference key="1">
    <citation type="thesis" date="2006" institute="Southwest University for Nationalities" country="China">
        <title>Molecular clone and sequence analysis of GnRHR, CGA, FSHB and LHB genes related to spermatogenesis of the Yak.</title>
        <authorList>
            <person name="Yu J.C."/>
        </authorList>
    </citation>
    <scope>NUCLEOTIDE SEQUENCE [GENOMIC DNA]</scope>
</reference>